<accession>B6I3W9</accession>
<name>ATPB_ECOSE</name>
<sequence length="460" mass="50325">MATGKIVQVIGAVVDVEFPQDAVPRVYDALEVQNGNERLVLEVQQQLGGGIVRTIAMGSSDGLRRGLDVKDLEHPIEVPVGKATLGRIMNVLGEPVDMKGEIGEEERWAIHRAAPSYEELSNSQELLETGIKVIDLMCPFAKGGKVGLFGGAGVGKTVNMMELIRNIAIEHSGYSVFAGVGERTREGNDFYHEMTDSNVIDKVSLVYGQMNEPPGNRLRVALTGLTMAEKFRDEGRDVLLFVDNIYRYTLAGTEVSALLGRMPSAVGYQPTLAEEMGVLQERITSTKTGSITSVQAVYVPADDLTDPSPATTFAHLDATVVLSRQIASLGIYPAVDPLDSTSRQLDPLVVGQEHYDTARGVQSILQRYQELKDIIAILGMDELSEEDKLVVARARKIQRFLSQPFFVAEVFTGSPGKYVSLKDTIRGFKGIMEGEYDHLPEQAFYMVGSIEEAVEKAKKL</sequence>
<organism>
    <name type="scientific">Escherichia coli (strain SE11)</name>
    <dbReference type="NCBI Taxonomy" id="409438"/>
    <lineage>
        <taxon>Bacteria</taxon>
        <taxon>Pseudomonadati</taxon>
        <taxon>Pseudomonadota</taxon>
        <taxon>Gammaproteobacteria</taxon>
        <taxon>Enterobacterales</taxon>
        <taxon>Enterobacteriaceae</taxon>
        <taxon>Escherichia</taxon>
    </lineage>
</organism>
<comment type="function">
    <text evidence="1">Produces ATP from ADP in the presence of a proton gradient across the membrane. The catalytic sites are hosted primarily by the beta subunits.</text>
</comment>
<comment type="catalytic activity">
    <reaction evidence="1">
        <text>ATP + H2O + 4 H(+)(in) = ADP + phosphate + 5 H(+)(out)</text>
        <dbReference type="Rhea" id="RHEA:57720"/>
        <dbReference type="ChEBI" id="CHEBI:15377"/>
        <dbReference type="ChEBI" id="CHEBI:15378"/>
        <dbReference type="ChEBI" id="CHEBI:30616"/>
        <dbReference type="ChEBI" id="CHEBI:43474"/>
        <dbReference type="ChEBI" id="CHEBI:456216"/>
        <dbReference type="EC" id="7.1.2.2"/>
    </reaction>
</comment>
<comment type="subunit">
    <text evidence="1">F-type ATPases have 2 components, CF(1) - the catalytic core - and CF(0) - the membrane proton channel. CF(1) has five subunits: alpha(3), beta(3), gamma(1), delta(1), epsilon(1). CF(0) has three main subunits: a(1), b(2) and c(9-12). The alpha and beta chains form an alternating ring which encloses part of the gamma chain. CF(1) is attached to CF(0) by a central stalk formed by the gamma and epsilon chains, while a peripheral stalk is formed by the delta and b chains.</text>
</comment>
<comment type="subcellular location">
    <subcellularLocation>
        <location evidence="1">Cell inner membrane</location>
        <topology evidence="1">Peripheral membrane protein</topology>
    </subcellularLocation>
</comment>
<comment type="similarity">
    <text evidence="1">Belongs to the ATPase alpha/beta chains family.</text>
</comment>
<feature type="chain" id="PRO_1000143505" description="ATP synthase subunit beta">
    <location>
        <begin position="1"/>
        <end position="460"/>
    </location>
</feature>
<feature type="binding site" evidence="1">
    <location>
        <begin position="150"/>
        <end position="157"/>
    </location>
    <ligand>
        <name>ATP</name>
        <dbReference type="ChEBI" id="CHEBI:30616"/>
    </ligand>
</feature>
<proteinExistence type="inferred from homology"/>
<dbReference type="EC" id="7.1.2.2" evidence="1"/>
<dbReference type="EMBL" id="AP009240">
    <property type="protein sequence ID" value="BAG79546.1"/>
    <property type="molecule type" value="Genomic_DNA"/>
</dbReference>
<dbReference type="RefSeq" id="WP_000190506.1">
    <property type="nucleotide sequence ID" value="NC_011415.1"/>
</dbReference>
<dbReference type="SMR" id="B6I3W9"/>
<dbReference type="GeneID" id="93778235"/>
<dbReference type="KEGG" id="ecy:ECSE_4022"/>
<dbReference type="HOGENOM" id="CLU_022398_0_2_6"/>
<dbReference type="Proteomes" id="UP000008199">
    <property type="component" value="Chromosome"/>
</dbReference>
<dbReference type="GO" id="GO:0005886">
    <property type="term" value="C:plasma membrane"/>
    <property type="evidence" value="ECO:0007669"/>
    <property type="project" value="UniProtKB-SubCell"/>
</dbReference>
<dbReference type="GO" id="GO:0045259">
    <property type="term" value="C:proton-transporting ATP synthase complex"/>
    <property type="evidence" value="ECO:0007669"/>
    <property type="project" value="UniProtKB-KW"/>
</dbReference>
<dbReference type="GO" id="GO:0005524">
    <property type="term" value="F:ATP binding"/>
    <property type="evidence" value="ECO:0007669"/>
    <property type="project" value="UniProtKB-UniRule"/>
</dbReference>
<dbReference type="GO" id="GO:0016887">
    <property type="term" value="F:ATP hydrolysis activity"/>
    <property type="evidence" value="ECO:0007669"/>
    <property type="project" value="InterPro"/>
</dbReference>
<dbReference type="GO" id="GO:0046933">
    <property type="term" value="F:proton-transporting ATP synthase activity, rotational mechanism"/>
    <property type="evidence" value="ECO:0007669"/>
    <property type="project" value="UniProtKB-UniRule"/>
</dbReference>
<dbReference type="CDD" id="cd18110">
    <property type="entry name" value="ATP-synt_F1_beta_C"/>
    <property type="match status" value="1"/>
</dbReference>
<dbReference type="CDD" id="cd18115">
    <property type="entry name" value="ATP-synt_F1_beta_N"/>
    <property type="match status" value="1"/>
</dbReference>
<dbReference type="CDD" id="cd01133">
    <property type="entry name" value="F1-ATPase_beta_CD"/>
    <property type="match status" value="1"/>
</dbReference>
<dbReference type="FunFam" id="1.10.1140.10:FF:000001">
    <property type="entry name" value="ATP synthase subunit beta"/>
    <property type="match status" value="1"/>
</dbReference>
<dbReference type="FunFam" id="2.40.10.170:FF:000003">
    <property type="entry name" value="ATP synthase subunit beta"/>
    <property type="match status" value="1"/>
</dbReference>
<dbReference type="FunFam" id="3.40.50.300:FF:000004">
    <property type="entry name" value="ATP synthase subunit beta"/>
    <property type="match status" value="1"/>
</dbReference>
<dbReference type="Gene3D" id="2.40.10.170">
    <property type="match status" value="1"/>
</dbReference>
<dbReference type="Gene3D" id="1.10.1140.10">
    <property type="entry name" value="Bovine Mitochondrial F1-atpase, Atp Synthase Beta Chain, Chain D, domain 3"/>
    <property type="match status" value="1"/>
</dbReference>
<dbReference type="Gene3D" id="3.40.50.300">
    <property type="entry name" value="P-loop containing nucleotide triphosphate hydrolases"/>
    <property type="match status" value="1"/>
</dbReference>
<dbReference type="HAMAP" id="MF_01347">
    <property type="entry name" value="ATP_synth_beta_bact"/>
    <property type="match status" value="1"/>
</dbReference>
<dbReference type="InterPro" id="IPR003593">
    <property type="entry name" value="AAA+_ATPase"/>
</dbReference>
<dbReference type="InterPro" id="IPR055190">
    <property type="entry name" value="ATP-synt_VA_C"/>
</dbReference>
<dbReference type="InterPro" id="IPR005722">
    <property type="entry name" value="ATP_synth_F1_bsu"/>
</dbReference>
<dbReference type="InterPro" id="IPR020003">
    <property type="entry name" value="ATPase_a/bsu_AS"/>
</dbReference>
<dbReference type="InterPro" id="IPR050053">
    <property type="entry name" value="ATPase_alpha/beta_chains"/>
</dbReference>
<dbReference type="InterPro" id="IPR004100">
    <property type="entry name" value="ATPase_F1/V1/A1_a/bsu_N"/>
</dbReference>
<dbReference type="InterPro" id="IPR036121">
    <property type="entry name" value="ATPase_F1/V1/A1_a/bsu_N_sf"/>
</dbReference>
<dbReference type="InterPro" id="IPR000194">
    <property type="entry name" value="ATPase_F1/V1/A1_a/bsu_nucl-bd"/>
</dbReference>
<dbReference type="InterPro" id="IPR024034">
    <property type="entry name" value="ATPase_F1/V1_b/a_C"/>
</dbReference>
<dbReference type="InterPro" id="IPR027417">
    <property type="entry name" value="P-loop_NTPase"/>
</dbReference>
<dbReference type="NCBIfam" id="TIGR01039">
    <property type="entry name" value="atpD"/>
    <property type="match status" value="1"/>
</dbReference>
<dbReference type="PANTHER" id="PTHR15184">
    <property type="entry name" value="ATP SYNTHASE"/>
    <property type="match status" value="1"/>
</dbReference>
<dbReference type="PANTHER" id="PTHR15184:SF71">
    <property type="entry name" value="ATP SYNTHASE SUBUNIT BETA, MITOCHONDRIAL"/>
    <property type="match status" value="1"/>
</dbReference>
<dbReference type="Pfam" id="PF00006">
    <property type="entry name" value="ATP-synt_ab"/>
    <property type="match status" value="1"/>
</dbReference>
<dbReference type="Pfam" id="PF02874">
    <property type="entry name" value="ATP-synt_ab_N"/>
    <property type="match status" value="1"/>
</dbReference>
<dbReference type="Pfam" id="PF22919">
    <property type="entry name" value="ATP-synt_VA_C"/>
    <property type="match status" value="1"/>
</dbReference>
<dbReference type="SMART" id="SM00382">
    <property type="entry name" value="AAA"/>
    <property type="match status" value="1"/>
</dbReference>
<dbReference type="SUPFAM" id="SSF47917">
    <property type="entry name" value="C-terminal domain of alpha and beta subunits of F1 ATP synthase"/>
    <property type="match status" value="1"/>
</dbReference>
<dbReference type="SUPFAM" id="SSF50615">
    <property type="entry name" value="N-terminal domain of alpha and beta subunits of F1 ATP synthase"/>
    <property type="match status" value="1"/>
</dbReference>
<dbReference type="SUPFAM" id="SSF52540">
    <property type="entry name" value="P-loop containing nucleoside triphosphate hydrolases"/>
    <property type="match status" value="1"/>
</dbReference>
<dbReference type="PROSITE" id="PS00152">
    <property type="entry name" value="ATPASE_ALPHA_BETA"/>
    <property type="match status" value="1"/>
</dbReference>
<keyword id="KW-0066">ATP synthesis</keyword>
<keyword id="KW-0067">ATP-binding</keyword>
<keyword id="KW-0997">Cell inner membrane</keyword>
<keyword id="KW-1003">Cell membrane</keyword>
<keyword id="KW-0139">CF(1)</keyword>
<keyword id="KW-0375">Hydrogen ion transport</keyword>
<keyword id="KW-0406">Ion transport</keyword>
<keyword id="KW-0472">Membrane</keyword>
<keyword id="KW-0547">Nucleotide-binding</keyword>
<keyword id="KW-1278">Translocase</keyword>
<keyword id="KW-0813">Transport</keyword>
<evidence type="ECO:0000255" key="1">
    <source>
        <dbReference type="HAMAP-Rule" id="MF_01347"/>
    </source>
</evidence>
<protein>
    <recommendedName>
        <fullName evidence="1">ATP synthase subunit beta</fullName>
        <ecNumber evidence="1">7.1.2.2</ecNumber>
    </recommendedName>
    <alternativeName>
        <fullName evidence="1">ATP synthase F1 sector subunit beta</fullName>
    </alternativeName>
    <alternativeName>
        <fullName evidence="1">F-ATPase subunit beta</fullName>
    </alternativeName>
</protein>
<reference key="1">
    <citation type="journal article" date="2008" name="DNA Res.">
        <title>Complete genome sequence and comparative analysis of the wild-type commensal Escherichia coli strain SE11 isolated from a healthy adult.</title>
        <authorList>
            <person name="Oshima K."/>
            <person name="Toh H."/>
            <person name="Ogura Y."/>
            <person name="Sasamoto H."/>
            <person name="Morita H."/>
            <person name="Park S.-H."/>
            <person name="Ooka T."/>
            <person name="Iyoda S."/>
            <person name="Taylor T.D."/>
            <person name="Hayashi T."/>
            <person name="Itoh K."/>
            <person name="Hattori M."/>
        </authorList>
    </citation>
    <scope>NUCLEOTIDE SEQUENCE [LARGE SCALE GENOMIC DNA]</scope>
    <source>
        <strain>SE11</strain>
    </source>
</reference>
<gene>
    <name evidence="1" type="primary">atpD</name>
    <name type="ordered locus">ECSE_4022</name>
</gene>